<dbReference type="EC" id="5.4.99.-"/>
<dbReference type="EMBL" id="AAFI02000043">
    <property type="protein sequence ID" value="EAL66526.1"/>
    <property type="molecule type" value="Genomic_DNA"/>
</dbReference>
<dbReference type="RefSeq" id="XP_640508.1">
    <property type="nucleotide sequence ID" value="XM_635416.1"/>
</dbReference>
<dbReference type="SMR" id="Q54T81"/>
<dbReference type="FunCoup" id="Q54T81">
    <property type="interactions" value="1069"/>
</dbReference>
<dbReference type="IntAct" id="Q54T81">
    <property type="interactions" value="1"/>
</dbReference>
<dbReference type="STRING" id="44689.Q54T81"/>
<dbReference type="PaxDb" id="44689-DDB0233679"/>
<dbReference type="EnsemblProtists" id="EAL66526">
    <property type="protein sequence ID" value="EAL66526"/>
    <property type="gene ID" value="DDB_G0281933"/>
</dbReference>
<dbReference type="GeneID" id="8623323"/>
<dbReference type="KEGG" id="ddi:DDB_G0281933"/>
<dbReference type="dictyBase" id="DDB_G0281933">
    <property type="gene designation" value="nola4"/>
</dbReference>
<dbReference type="VEuPathDB" id="AmoebaDB:DDB_G0281933"/>
<dbReference type="eggNOG" id="KOG2529">
    <property type="taxonomic scope" value="Eukaryota"/>
</dbReference>
<dbReference type="HOGENOM" id="CLU_032087_3_2_1"/>
<dbReference type="InParanoid" id="Q54T81"/>
<dbReference type="OMA" id="KYGRTNE"/>
<dbReference type="PhylomeDB" id="Q54T81"/>
<dbReference type="Reactome" id="R-DDI-171319">
    <property type="pathway name" value="Telomere Extension By Telomerase"/>
</dbReference>
<dbReference type="PRO" id="PR:Q54T81"/>
<dbReference type="Proteomes" id="UP000002195">
    <property type="component" value="Chromosome 3"/>
</dbReference>
<dbReference type="GO" id="GO:0031429">
    <property type="term" value="C:box H/ACA snoRNP complex"/>
    <property type="evidence" value="ECO:0000318"/>
    <property type="project" value="GO_Central"/>
</dbReference>
<dbReference type="GO" id="GO:0005730">
    <property type="term" value="C:nucleolus"/>
    <property type="evidence" value="ECO:0000314"/>
    <property type="project" value="dictyBase"/>
</dbReference>
<dbReference type="GO" id="GO:0005697">
    <property type="term" value="C:telomerase holoenzyme complex"/>
    <property type="evidence" value="ECO:0000250"/>
    <property type="project" value="dictyBase"/>
</dbReference>
<dbReference type="GO" id="GO:0009982">
    <property type="term" value="F:pseudouridine synthase activity"/>
    <property type="evidence" value="ECO:0000318"/>
    <property type="project" value="GO_Central"/>
</dbReference>
<dbReference type="GO" id="GO:0003723">
    <property type="term" value="F:RNA binding"/>
    <property type="evidence" value="ECO:0000250"/>
    <property type="project" value="dictyBase"/>
</dbReference>
<dbReference type="GO" id="GO:0003720">
    <property type="term" value="F:telomerase activity"/>
    <property type="evidence" value="ECO:0000250"/>
    <property type="project" value="dictyBase"/>
</dbReference>
<dbReference type="GO" id="GO:0000495">
    <property type="term" value="P:box H/ACA sno(s)RNA 3'-end processing"/>
    <property type="evidence" value="ECO:0000318"/>
    <property type="project" value="GO_Central"/>
</dbReference>
<dbReference type="GO" id="GO:0006974">
    <property type="term" value="P:DNA damage response"/>
    <property type="evidence" value="ECO:0000315"/>
    <property type="project" value="dictyBase"/>
</dbReference>
<dbReference type="GO" id="GO:1990481">
    <property type="term" value="P:mRNA pseudouridine synthesis"/>
    <property type="evidence" value="ECO:0000318"/>
    <property type="project" value="GO_Central"/>
</dbReference>
<dbReference type="GO" id="GO:0046689">
    <property type="term" value="P:response to mercury ion"/>
    <property type="evidence" value="ECO:0000314"/>
    <property type="project" value="dictyBase"/>
</dbReference>
<dbReference type="GO" id="GO:0006979">
    <property type="term" value="P:response to oxidative stress"/>
    <property type="evidence" value="ECO:0000315"/>
    <property type="project" value="dictyBase"/>
</dbReference>
<dbReference type="GO" id="GO:0031118">
    <property type="term" value="P:rRNA pseudouridine synthesis"/>
    <property type="evidence" value="ECO:0000318"/>
    <property type="project" value="GO_Central"/>
</dbReference>
<dbReference type="GO" id="GO:0031120">
    <property type="term" value="P:snRNA pseudouridine synthesis"/>
    <property type="evidence" value="ECO:0000318"/>
    <property type="project" value="GO_Central"/>
</dbReference>
<dbReference type="CDD" id="cd02572">
    <property type="entry name" value="PseudoU_synth_hDyskerin"/>
    <property type="match status" value="1"/>
</dbReference>
<dbReference type="CDD" id="cd21148">
    <property type="entry name" value="PUA_Cbf5"/>
    <property type="match status" value="1"/>
</dbReference>
<dbReference type="FunFam" id="3.30.2350.10:FF:000001">
    <property type="entry name" value="H/ACA ribonucleoprotein complex subunit CBF5"/>
    <property type="match status" value="1"/>
</dbReference>
<dbReference type="Gene3D" id="3.30.2350.10">
    <property type="entry name" value="Pseudouridine synthase"/>
    <property type="match status" value="1"/>
</dbReference>
<dbReference type="Gene3D" id="2.30.130.10">
    <property type="entry name" value="PUA domain"/>
    <property type="match status" value="1"/>
</dbReference>
<dbReference type="InterPro" id="IPR012960">
    <property type="entry name" value="Dyskerin-like"/>
</dbReference>
<dbReference type="InterPro" id="IPR020103">
    <property type="entry name" value="PsdUridine_synth_cat_dom_sf"/>
</dbReference>
<dbReference type="InterPro" id="IPR002501">
    <property type="entry name" value="PsdUridine_synth_N"/>
</dbReference>
<dbReference type="InterPro" id="IPR002478">
    <property type="entry name" value="PUA"/>
</dbReference>
<dbReference type="InterPro" id="IPR015947">
    <property type="entry name" value="PUA-like_sf"/>
</dbReference>
<dbReference type="InterPro" id="IPR036974">
    <property type="entry name" value="PUA_sf"/>
</dbReference>
<dbReference type="InterPro" id="IPR004802">
    <property type="entry name" value="tRNA_PsdUridine_synth_B_fam"/>
</dbReference>
<dbReference type="InterPro" id="IPR032819">
    <property type="entry name" value="TruB_C"/>
</dbReference>
<dbReference type="InterPro" id="IPR004521">
    <property type="entry name" value="Uncharacterised_CHP00451"/>
</dbReference>
<dbReference type="NCBIfam" id="TIGR00425">
    <property type="entry name" value="CBF5"/>
    <property type="match status" value="1"/>
</dbReference>
<dbReference type="NCBIfam" id="NF003280">
    <property type="entry name" value="PRK04270.1"/>
    <property type="match status" value="1"/>
</dbReference>
<dbReference type="NCBIfam" id="TIGR00451">
    <property type="entry name" value="unchar_dom_2"/>
    <property type="match status" value="1"/>
</dbReference>
<dbReference type="PANTHER" id="PTHR23127">
    <property type="entry name" value="CENTROMERE/MICROTUBULE BINDING PROTEIN CBF5"/>
    <property type="match status" value="1"/>
</dbReference>
<dbReference type="PANTHER" id="PTHR23127:SF0">
    <property type="entry name" value="H_ACA RIBONUCLEOPROTEIN COMPLEX SUBUNIT DKC1"/>
    <property type="match status" value="1"/>
</dbReference>
<dbReference type="Pfam" id="PF08068">
    <property type="entry name" value="DKCLD"/>
    <property type="match status" value="1"/>
</dbReference>
<dbReference type="Pfam" id="PF01472">
    <property type="entry name" value="PUA"/>
    <property type="match status" value="1"/>
</dbReference>
<dbReference type="Pfam" id="PF16198">
    <property type="entry name" value="TruB_C_2"/>
    <property type="match status" value="1"/>
</dbReference>
<dbReference type="Pfam" id="PF01509">
    <property type="entry name" value="TruB_N"/>
    <property type="match status" value="1"/>
</dbReference>
<dbReference type="SMART" id="SM01136">
    <property type="entry name" value="DKCLD"/>
    <property type="match status" value="1"/>
</dbReference>
<dbReference type="SMART" id="SM00359">
    <property type="entry name" value="PUA"/>
    <property type="match status" value="1"/>
</dbReference>
<dbReference type="SUPFAM" id="SSF55120">
    <property type="entry name" value="Pseudouridine synthase"/>
    <property type="match status" value="1"/>
</dbReference>
<dbReference type="SUPFAM" id="SSF88697">
    <property type="entry name" value="PUA domain-like"/>
    <property type="match status" value="1"/>
</dbReference>
<dbReference type="PROSITE" id="PS50890">
    <property type="entry name" value="PUA"/>
    <property type="match status" value="1"/>
</dbReference>
<evidence type="ECO:0000250" key="1"/>
<evidence type="ECO:0000255" key="2"/>
<evidence type="ECO:0000255" key="3">
    <source>
        <dbReference type="PROSITE-ProRule" id="PRU00161"/>
    </source>
</evidence>
<evidence type="ECO:0000256" key="4">
    <source>
        <dbReference type="SAM" id="MobiDB-lite"/>
    </source>
</evidence>
<evidence type="ECO:0000305" key="5"/>
<feature type="chain" id="PRO_0000331202" description="Probable H/ACA ribonucleoprotein complex subunit 4">
    <location>
        <begin position="1"/>
        <end position="540"/>
    </location>
</feature>
<feature type="domain" description="PUA" evidence="3">
    <location>
        <begin position="280"/>
        <end position="355"/>
    </location>
</feature>
<feature type="region of interest" description="Disordered" evidence="4">
    <location>
        <begin position="1"/>
        <end position="24"/>
    </location>
</feature>
<feature type="region of interest" description="Disordered" evidence="4">
    <location>
        <begin position="414"/>
        <end position="540"/>
    </location>
</feature>
<feature type="coiled-coil region" evidence="2">
    <location>
        <begin position="448"/>
        <end position="494"/>
    </location>
</feature>
<feature type="compositionally biased region" description="Basic residues" evidence="4">
    <location>
        <begin position="473"/>
        <end position="489"/>
    </location>
</feature>
<feature type="compositionally biased region" description="Basic and acidic residues" evidence="4">
    <location>
        <begin position="490"/>
        <end position="503"/>
    </location>
</feature>
<feature type="compositionally biased region" description="Basic and acidic residues" evidence="4">
    <location>
        <begin position="513"/>
        <end position="528"/>
    </location>
</feature>
<feature type="compositionally biased region" description="Basic residues" evidence="4">
    <location>
        <begin position="529"/>
        <end position="540"/>
    </location>
</feature>
<feature type="active site" description="Nucleophile" evidence="1">
    <location>
        <position position="109"/>
    </location>
</feature>
<protein>
    <recommendedName>
        <fullName>Probable H/ACA ribonucleoprotein complex subunit 4</fullName>
        <ecNumber>5.4.99.-</ecNumber>
    </recommendedName>
</protein>
<reference key="1">
    <citation type="journal article" date="2005" name="Nature">
        <title>The genome of the social amoeba Dictyostelium discoideum.</title>
        <authorList>
            <person name="Eichinger L."/>
            <person name="Pachebat J.A."/>
            <person name="Gloeckner G."/>
            <person name="Rajandream M.A."/>
            <person name="Sucgang R."/>
            <person name="Berriman M."/>
            <person name="Song J."/>
            <person name="Olsen R."/>
            <person name="Szafranski K."/>
            <person name="Xu Q."/>
            <person name="Tunggal B."/>
            <person name="Kummerfeld S."/>
            <person name="Madera M."/>
            <person name="Konfortov B.A."/>
            <person name="Rivero F."/>
            <person name="Bankier A.T."/>
            <person name="Lehmann R."/>
            <person name="Hamlin N."/>
            <person name="Davies R."/>
            <person name="Gaudet P."/>
            <person name="Fey P."/>
            <person name="Pilcher K."/>
            <person name="Chen G."/>
            <person name="Saunders D."/>
            <person name="Sodergren E.J."/>
            <person name="Davis P."/>
            <person name="Kerhornou A."/>
            <person name="Nie X."/>
            <person name="Hall N."/>
            <person name="Anjard C."/>
            <person name="Hemphill L."/>
            <person name="Bason N."/>
            <person name="Farbrother P."/>
            <person name="Desany B."/>
            <person name="Just E."/>
            <person name="Morio T."/>
            <person name="Rost R."/>
            <person name="Churcher C.M."/>
            <person name="Cooper J."/>
            <person name="Haydock S."/>
            <person name="van Driessche N."/>
            <person name="Cronin A."/>
            <person name="Goodhead I."/>
            <person name="Muzny D.M."/>
            <person name="Mourier T."/>
            <person name="Pain A."/>
            <person name="Lu M."/>
            <person name="Harper D."/>
            <person name="Lindsay R."/>
            <person name="Hauser H."/>
            <person name="James K.D."/>
            <person name="Quiles M."/>
            <person name="Madan Babu M."/>
            <person name="Saito T."/>
            <person name="Buchrieser C."/>
            <person name="Wardroper A."/>
            <person name="Felder M."/>
            <person name="Thangavelu M."/>
            <person name="Johnson D."/>
            <person name="Knights A."/>
            <person name="Loulseged H."/>
            <person name="Mungall K.L."/>
            <person name="Oliver K."/>
            <person name="Price C."/>
            <person name="Quail M.A."/>
            <person name="Urushihara H."/>
            <person name="Hernandez J."/>
            <person name="Rabbinowitsch E."/>
            <person name="Steffen D."/>
            <person name="Sanders M."/>
            <person name="Ma J."/>
            <person name="Kohara Y."/>
            <person name="Sharp S."/>
            <person name="Simmonds M.N."/>
            <person name="Spiegler S."/>
            <person name="Tivey A."/>
            <person name="Sugano S."/>
            <person name="White B."/>
            <person name="Walker D."/>
            <person name="Woodward J.R."/>
            <person name="Winckler T."/>
            <person name="Tanaka Y."/>
            <person name="Shaulsky G."/>
            <person name="Schleicher M."/>
            <person name="Weinstock G.M."/>
            <person name="Rosenthal A."/>
            <person name="Cox E.C."/>
            <person name="Chisholm R.L."/>
            <person name="Gibbs R.A."/>
            <person name="Loomis W.F."/>
            <person name="Platzer M."/>
            <person name="Kay R.R."/>
            <person name="Williams J.G."/>
            <person name="Dear P.H."/>
            <person name="Noegel A.A."/>
            <person name="Barrell B.G."/>
            <person name="Kuspa A."/>
        </authorList>
    </citation>
    <scope>NUCLEOTIDE SEQUENCE [LARGE SCALE GENOMIC DNA]</scope>
    <source>
        <strain>AX4</strain>
    </source>
</reference>
<reference key="2">
    <citation type="journal article" date="2006" name="J. Proteome Res.">
        <title>Identification of novel centrosomal proteins in Dictyostelium discoideum by comparative proteomic approaches.</title>
        <authorList>
            <person name="Reinders Y."/>
            <person name="Schulz I."/>
            <person name="Graef R."/>
            <person name="Sickmann A."/>
        </authorList>
    </citation>
    <scope>IDENTIFICATION BY MASS SPECTROMETRY [LARGE SCALE ANALYSIS]</scope>
</reference>
<proteinExistence type="evidence at protein level"/>
<accession>Q54T81</accession>
<comment type="function">
    <text evidence="1">Plays a central role in ribosomal RNA processing. Probable catalytic subunit of H/ACA small nucleolar ribonucleoprotein (H/ACA snoRNP) complex, which catalyzes pseudouridylation of rRNA. This involves the isomerization of uridine such that the ribose is subsequently attached to C5, instead of the normal N1. Pseudouridine ('psi') residues may serve to stabilize the conformation of rRNAs (By similarity).</text>
</comment>
<comment type="catalytic activity">
    <reaction>
        <text>a uridine in RNA = a pseudouridine in RNA</text>
        <dbReference type="Rhea" id="RHEA:48348"/>
        <dbReference type="Rhea" id="RHEA-COMP:12068"/>
        <dbReference type="Rhea" id="RHEA-COMP:12069"/>
        <dbReference type="ChEBI" id="CHEBI:65314"/>
        <dbReference type="ChEBI" id="CHEBI:65315"/>
    </reaction>
</comment>
<comment type="subunit">
    <text evidence="1">Component of the small nucleolar ribonucleoprotein particles containing H/ACA-type snoRNAs (H/ACA snoRNPs).</text>
</comment>
<comment type="subcellular location">
    <subcellularLocation>
        <location evidence="1">Nucleus</location>
        <location evidence="1">Nucleolus</location>
    </subcellularLocation>
</comment>
<comment type="similarity">
    <text evidence="5">Belongs to the pseudouridine synthase TruB family.</text>
</comment>
<keyword id="KW-0175">Coiled coil</keyword>
<keyword id="KW-0413">Isomerase</keyword>
<keyword id="KW-0539">Nucleus</keyword>
<keyword id="KW-1185">Reference proteome</keyword>
<keyword id="KW-0687">Ribonucleoprotein</keyword>
<keyword id="KW-0690">Ribosome biogenesis</keyword>
<keyword id="KW-0694">RNA-binding</keyword>
<keyword id="KW-0698">rRNA processing</keyword>
<organism>
    <name type="scientific">Dictyostelium discoideum</name>
    <name type="common">Social amoeba</name>
    <dbReference type="NCBI Taxonomy" id="44689"/>
    <lineage>
        <taxon>Eukaryota</taxon>
        <taxon>Amoebozoa</taxon>
        <taxon>Evosea</taxon>
        <taxon>Eumycetozoa</taxon>
        <taxon>Dictyostelia</taxon>
        <taxon>Dictyosteliales</taxon>
        <taxon>Dictyosteliaceae</taxon>
        <taxon>Dictyostelium</taxon>
    </lineage>
</organism>
<gene>
    <name type="primary">nola4</name>
    <name type="synonym">dkc1</name>
    <name type="ORF">DDB_G0281933</name>
</gene>
<sequence>MTTDKKSKSKSSEKSTQEVEQVIKPEKTPILDTSKWPLLLKNYDQLSVRTGHYTPIPNGHSPLKRPIKEYVKYGIINLDKPSNPSSHEVVAWIRTILRVTKTGHSGTLDPKVTGCLIVCIERATRLVKSQQGAGKEYIGIVRLHGAIEGTTELSKAVDTLTGALFQRPPQKSAVKKRLRVRTIHNSKLLEFDPERNLGLIWVDCEAGTYIRTLCVHIGLLMGVGGHMQELRRVRSGIMSEKKGQVTMHDVKDAQYEYDNSKDESYLRRVIQPLEAILTNYKRIVVKDSAINAICYGAKLMIPGLLRYEQDIESNEEVVLITTKGEAIAIGIAQMTTASMATCDHGVVATIKRVIMDRDVYPVRWGLGPKAKVKKEMIKDGKLDKFGKPNEKTPSDWTNTYTYYTGQVATTTTTSPVESMNVDTPKKATASVAVKAEVESSEDEKPVPKKEKKDKKEKKKDSSDDESEEEKSSKKDKKEKKEKKEKKEKKSSKDDSDDESSKKEKKDKKRKKSSDKDSDSEKESSDKKDKKDKKEKKKSKN</sequence>
<name>DKC1_DICDI</name>